<gene>
    <name evidence="1" type="primary">gpsA</name>
    <name type="ordered locus">Dtpsy_2824</name>
</gene>
<keyword id="KW-0963">Cytoplasm</keyword>
<keyword id="KW-0444">Lipid biosynthesis</keyword>
<keyword id="KW-0443">Lipid metabolism</keyword>
<keyword id="KW-0520">NAD</keyword>
<keyword id="KW-0521">NADP</keyword>
<keyword id="KW-0547">Nucleotide-binding</keyword>
<keyword id="KW-0560">Oxidoreductase</keyword>
<keyword id="KW-0594">Phospholipid biosynthesis</keyword>
<keyword id="KW-1208">Phospholipid metabolism</keyword>
<keyword id="KW-1185">Reference proteome</keyword>
<sequence length="330" mass="34203">MKIVVLGAGAWGTALAISAAAHAACHEVQLWARDAQQAQAMQAKRQNQRYLPGLAFPPGLHVASGDMAALAADADLVVVGTPMAALRGMLERLDGCAAPIAWLCKGFEAGTGLMAHEVCAQVAPRLHSGVFSGPSFAQEVATAQPTAMVAASPRATVRDALVQAFHGPALRVYASEDIVGVEVGGAVKNVLAIATGLCDGLQLGMNARAALITRGLAEMTRLGLALGARPETFMGLSGLGDLVLTATGDLSRNRRVGLLLAEGRTLAQAVESLGHVAEGVYSARTVVQRARAVGVEMPIAECVVALLDGELRAAETVARLMEREPTVERH</sequence>
<feature type="chain" id="PRO_1000190136" description="Glycerol-3-phosphate dehydrogenase [NAD(P)+]">
    <location>
        <begin position="1"/>
        <end position="330"/>
    </location>
</feature>
<feature type="active site" description="Proton acceptor" evidence="1">
    <location>
        <position position="188"/>
    </location>
</feature>
<feature type="binding site" evidence="1">
    <location>
        <position position="11"/>
    </location>
    <ligand>
        <name>NADPH</name>
        <dbReference type="ChEBI" id="CHEBI:57783"/>
    </ligand>
</feature>
<feature type="binding site" evidence="1">
    <location>
        <position position="33"/>
    </location>
    <ligand>
        <name>NADPH</name>
        <dbReference type="ChEBI" id="CHEBI:57783"/>
    </ligand>
</feature>
<feature type="binding site" evidence="1">
    <location>
        <position position="105"/>
    </location>
    <ligand>
        <name>NADPH</name>
        <dbReference type="ChEBI" id="CHEBI:57783"/>
    </ligand>
</feature>
<feature type="binding site" evidence="1">
    <location>
        <position position="105"/>
    </location>
    <ligand>
        <name>sn-glycerol 3-phosphate</name>
        <dbReference type="ChEBI" id="CHEBI:57597"/>
    </ligand>
</feature>
<feature type="binding site" evidence="1">
    <location>
        <position position="133"/>
    </location>
    <ligand>
        <name>sn-glycerol 3-phosphate</name>
        <dbReference type="ChEBI" id="CHEBI:57597"/>
    </ligand>
</feature>
<feature type="binding site" evidence="1">
    <location>
        <position position="135"/>
    </location>
    <ligand>
        <name>sn-glycerol 3-phosphate</name>
        <dbReference type="ChEBI" id="CHEBI:57597"/>
    </ligand>
</feature>
<feature type="binding site" evidence="1">
    <location>
        <position position="137"/>
    </location>
    <ligand>
        <name>NADPH</name>
        <dbReference type="ChEBI" id="CHEBI:57783"/>
    </ligand>
</feature>
<feature type="binding site" evidence="1">
    <location>
        <position position="188"/>
    </location>
    <ligand>
        <name>sn-glycerol 3-phosphate</name>
        <dbReference type="ChEBI" id="CHEBI:57597"/>
    </ligand>
</feature>
<feature type="binding site" evidence="1">
    <location>
        <position position="241"/>
    </location>
    <ligand>
        <name>sn-glycerol 3-phosphate</name>
        <dbReference type="ChEBI" id="CHEBI:57597"/>
    </ligand>
</feature>
<feature type="binding site" evidence="1">
    <location>
        <position position="251"/>
    </location>
    <ligand>
        <name>sn-glycerol 3-phosphate</name>
        <dbReference type="ChEBI" id="CHEBI:57597"/>
    </ligand>
</feature>
<feature type="binding site" evidence="1">
    <location>
        <position position="252"/>
    </location>
    <ligand>
        <name>NADPH</name>
        <dbReference type="ChEBI" id="CHEBI:57783"/>
    </ligand>
</feature>
<feature type="binding site" evidence="1">
    <location>
        <position position="252"/>
    </location>
    <ligand>
        <name>sn-glycerol 3-phosphate</name>
        <dbReference type="ChEBI" id="CHEBI:57597"/>
    </ligand>
</feature>
<feature type="binding site" evidence="1">
    <location>
        <position position="253"/>
    </location>
    <ligand>
        <name>sn-glycerol 3-phosphate</name>
        <dbReference type="ChEBI" id="CHEBI:57597"/>
    </ligand>
</feature>
<feature type="binding site" evidence="1">
    <location>
        <position position="276"/>
    </location>
    <ligand>
        <name>NADPH</name>
        <dbReference type="ChEBI" id="CHEBI:57783"/>
    </ligand>
</feature>
<feature type="binding site" evidence="1">
    <location>
        <position position="278"/>
    </location>
    <ligand>
        <name>NADPH</name>
        <dbReference type="ChEBI" id="CHEBI:57783"/>
    </ligand>
</feature>
<reference key="1">
    <citation type="submission" date="2009-01" db="EMBL/GenBank/DDBJ databases">
        <title>Complete sequence of Diaphorobacter sp. TPSY.</title>
        <authorList>
            <consortium name="US DOE Joint Genome Institute"/>
            <person name="Lucas S."/>
            <person name="Copeland A."/>
            <person name="Lapidus A."/>
            <person name="Glavina del Rio T."/>
            <person name="Tice H."/>
            <person name="Bruce D."/>
            <person name="Goodwin L."/>
            <person name="Pitluck S."/>
            <person name="Chertkov O."/>
            <person name="Brettin T."/>
            <person name="Detter J.C."/>
            <person name="Han C."/>
            <person name="Larimer F."/>
            <person name="Land M."/>
            <person name="Hauser L."/>
            <person name="Kyrpides N."/>
            <person name="Mikhailova N."/>
            <person name="Coates J.D."/>
        </authorList>
    </citation>
    <scope>NUCLEOTIDE SEQUENCE [LARGE SCALE GENOMIC DNA]</scope>
    <source>
        <strain>TPSY</strain>
    </source>
</reference>
<dbReference type="EC" id="1.1.1.94" evidence="1"/>
<dbReference type="EMBL" id="CP001392">
    <property type="protein sequence ID" value="ACM34258.1"/>
    <property type="molecule type" value="Genomic_DNA"/>
</dbReference>
<dbReference type="RefSeq" id="WP_015914137.1">
    <property type="nucleotide sequence ID" value="NC_011992.1"/>
</dbReference>
<dbReference type="SMR" id="B9MEY8"/>
<dbReference type="KEGG" id="dia:Dtpsy_2824"/>
<dbReference type="eggNOG" id="COG0240">
    <property type="taxonomic scope" value="Bacteria"/>
</dbReference>
<dbReference type="HOGENOM" id="CLU_033449_0_2_4"/>
<dbReference type="UniPathway" id="UPA00940"/>
<dbReference type="Proteomes" id="UP000000450">
    <property type="component" value="Chromosome"/>
</dbReference>
<dbReference type="GO" id="GO:0005829">
    <property type="term" value="C:cytosol"/>
    <property type="evidence" value="ECO:0007669"/>
    <property type="project" value="TreeGrafter"/>
</dbReference>
<dbReference type="GO" id="GO:0047952">
    <property type="term" value="F:glycerol-3-phosphate dehydrogenase [NAD(P)+] activity"/>
    <property type="evidence" value="ECO:0007669"/>
    <property type="project" value="UniProtKB-UniRule"/>
</dbReference>
<dbReference type="GO" id="GO:0051287">
    <property type="term" value="F:NAD binding"/>
    <property type="evidence" value="ECO:0007669"/>
    <property type="project" value="InterPro"/>
</dbReference>
<dbReference type="GO" id="GO:0005975">
    <property type="term" value="P:carbohydrate metabolic process"/>
    <property type="evidence" value="ECO:0007669"/>
    <property type="project" value="InterPro"/>
</dbReference>
<dbReference type="GO" id="GO:0046167">
    <property type="term" value="P:glycerol-3-phosphate biosynthetic process"/>
    <property type="evidence" value="ECO:0007669"/>
    <property type="project" value="UniProtKB-UniRule"/>
</dbReference>
<dbReference type="GO" id="GO:0046168">
    <property type="term" value="P:glycerol-3-phosphate catabolic process"/>
    <property type="evidence" value="ECO:0007669"/>
    <property type="project" value="InterPro"/>
</dbReference>
<dbReference type="GO" id="GO:0006650">
    <property type="term" value="P:glycerophospholipid metabolic process"/>
    <property type="evidence" value="ECO:0007669"/>
    <property type="project" value="UniProtKB-UniRule"/>
</dbReference>
<dbReference type="GO" id="GO:0008654">
    <property type="term" value="P:phospholipid biosynthetic process"/>
    <property type="evidence" value="ECO:0007669"/>
    <property type="project" value="UniProtKB-KW"/>
</dbReference>
<dbReference type="FunFam" id="1.10.1040.10:FF:000001">
    <property type="entry name" value="Glycerol-3-phosphate dehydrogenase [NAD(P)+]"/>
    <property type="match status" value="1"/>
</dbReference>
<dbReference type="FunFam" id="3.40.50.720:FF:000019">
    <property type="entry name" value="Glycerol-3-phosphate dehydrogenase [NAD(P)+]"/>
    <property type="match status" value="1"/>
</dbReference>
<dbReference type="Gene3D" id="1.10.1040.10">
    <property type="entry name" value="N-(1-d-carboxylethyl)-l-norvaline Dehydrogenase, domain 2"/>
    <property type="match status" value="1"/>
</dbReference>
<dbReference type="Gene3D" id="3.40.50.720">
    <property type="entry name" value="NAD(P)-binding Rossmann-like Domain"/>
    <property type="match status" value="1"/>
</dbReference>
<dbReference type="HAMAP" id="MF_00394">
    <property type="entry name" value="NAD_Glyc3P_dehydrog"/>
    <property type="match status" value="1"/>
</dbReference>
<dbReference type="InterPro" id="IPR008927">
    <property type="entry name" value="6-PGluconate_DH-like_C_sf"/>
</dbReference>
<dbReference type="InterPro" id="IPR013328">
    <property type="entry name" value="6PGD_dom2"/>
</dbReference>
<dbReference type="InterPro" id="IPR006168">
    <property type="entry name" value="G3P_DH_NAD-dep"/>
</dbReference>
<dbReference type="InterPro" id="IPR006109">
    <property type="entry name" value="G3P_DH_NAD-dep_C"/>
</dbReference>
<dbReference type="InterPro" id="IPR011128">
    <property type="entry name" value="G3P_DH_NAD-dep_N"/>
</dbReference>
<dbReference type="InterPro" id="IPR036291">
    <property type="entry name" value="NAD(P)-bd_dom_sf"/>
</dbReference>
<dbReference type="NCBIfam" id="NF000940">
    <property type="entry name" value="PRK00094.1-2"/>
    <property type="match status" value="1"/>
</dbReference>
<dbReference type="NCBIfam" id="NF000942">
    <property type="entry name" value="PRK00094.1-4"/>
    <property type="match status" value="1"/>
</dbReference>
<dbReference type="PANTHER" id="PTHR11728">
    <property type="entry name" value="GLYCEROL-3-PHOSPHATE DEHYDROGENASE"/>
    <property type="match status" value="1"/>
</dbReference>
<dbReference type="PANTHER" id="PTHR11728:SF1">
    <property type="entry name" value="GLYCEROL-3-PHOSPHATE DEHYDROGENASE [NAD(+)] 2, CHLOROPLASTIC"/>
    <property type="match status" value="1"/>
</dbReference>
<dbReference type="Pfam" id="PF07479">
    <property type="entry name" value="NAD_Gly3P_dh_C"/>
    <property type="match status" value="1"/>
</dbReference>
<dbReference type="Pfam" id="PF01210">
    <property type="entry name" value="NAD_Gly3P_dh_N"/>
    <property type="match status" value="1"/>
</dbReference>
<dbReference type="PIRSF" id="PIRSF000114">
    <property type="entry name" value="Glycerol-3-P_dh"/>
    <property type="match status" value="1"/>
</dbReference>
<dbReference type="PRINTS" id="PR00077">
    <property type="entry name" value="GPDHDRGNASE"/>
</dbReference>
<dbReference type="SUPFAM" id="SSF48179">
    <property type="entry name" value="6-phosphogluconate dehydrogenase C-terminal domain-like"/>
    <property type="match status" value="1"/>
</dbReference>
<dbReference type="SUPFAM" id="SSF51735">
    <property type="entry name" value="NAD(P)-binding Rossmann-fold domains"/>
    <property type="match status" value="1"/>
</dbReference>
<dbReference type="PROSITE" id="PS00957">
    <property type="entry name" value="NAD_G3PDH"/>
    <property type="match status" value="1"/>
</dbReference>
<organism>
    <name type="scientific">Acidovorax ebreus (strain TPSY)</name>
    <name type="common">Diaphorobacter sp. (strain TPSY)</name>
    <dbReference type="NCBI Taxonomy" id="535289"/>
    <lineage>
        <taxon>Bacteria</taxon>
        <taxon>Pseudomonadati</taxon>
        <taxon>Pseudomonadota</taxon>
        <taxon>Betaproteobacteria</taxon>
        <taxon>Burkholderiales</taxon>
        <taxon>Comamonadaceae</taxon>
        <taxon>Diaphorobacter</taxon>
    </lineage>
</organism>
<proteinExistence type="inferred from homology"/>
<protein>
    <recommendedName>
        <fullName evidence="1">Glycerol-3-phosphate dehydrogenase [NAD(P)+]</fullName>
        <ecNumber evidence="1">1.1.1.94</ecNumber>
    </recommendedName>
    <alternativeName>
        <fullName evidence="1">NAD(P)(+)-dependent glycerol-3-phosphate dehydrogenase</fullName>
    </alternativeName>
    <alternativeName>
        <fullName evidence="1">NAD(P)H-dependent dihydroxyacetone-phosphate reductase</fullName>
    </alternativeName>
</protein>
<comment type="function">
    <text evidence="1">Catalyzes the reduction of the glycolytic intermediate dihydroxyacetone phosphate (DHAP) to sn-glycerol 3-phosphate (G3P), the key precursor for phospholipid synthesis.</text>
</comment>
<comment type="catalytic activity">
    <reaction evidence="1">
        <text>sn-glycerol 3-phosphate + NAD(+) = dihydroxyacetone phosphate + NADH + H(+)</text>
        <dbReference type="Rhea" id="RHEA:11092"/>
        <dbReference type="ChEBI" id="CHEBI:15378"/>
        <dbReference type="ChEBI" id="CHEBI:57540"/>
        <dbReference type="ChEBI" id="CHEBI:57597"/>
        <dbReference type="ChEBI" id="CHEBI:57642"/>
        <dbReference type="ChEBI" id="CHEBI:57945"/>
        <dbReference type="EC" id="1.1.1.94"/>
    </reaction>
    <physiologicalReaction direction="right-to-left" evidence="1">
        <dbReference type="Rhea" id="RHEA:11094"/>
    </physiologicalReaction>
</comment>
<comment type="catalytic activity">
    <reaction evidence="1">
        <text>sn-glycerol 3-phosphate + NADP(+) = dihydroxyacetone phosphate + NADPH + H(+)</text>
        <dbReference type="Rhea" id="RHEA:11096"/>
        <dbReference type="ChEBI" id="CHEBI:15378"/>
        <dbReference type="ChEBI" id="CHEBI:57597"/>
        <dbReference type="ChEBI" id="CHEBI:57642"/>
        <dbReference type="ChEBI" id="CHEBI:57783"/>
        <dbReference type="ChEBI" id="CHEBI:58349"/>
        <dbReference type="EC" id="1.1.1.94"/>
    </reaction>
    <physiologicalReaction direction="right-to-left" evidence="1">
        <dbReference type="Rhea" id="RHEA:11098"/>
    </physiologicalReaction>
</comment>
<comment type="pathway">
    <text evidence="1">Membrane lipid metabolism; glycerophospholipid metabolism.</text>
</comment>
<comment type="subcellular location">
    <subcellularLocation>
        <location evidence="1">Cytoplasm</location>
    </subcellularLocation>
</comment>
<comment type="similarity">
    <text evidence="1">Belongs to the NAD-dependent glycerol-3-phosphate dehydrogenase family.</text>
</comment>
<accession>B9MEY8</accession>
<evidence type="ECO:0000255" key="1">
    <source>
        <dbReference type="HAMAP-Rule" id="MF_00394"/>
    </source>
</evidence>
<name>GPDA_ACIET</name>